<name>RS12_PROMM</name>
<keyword id="KW-0488">Methylation</keyword>
<keyword id="KW-1185">Reference proteome</keyword>
<keyword id="KW-0687">Ribonucleoprotein</keyword>
<keyword id="KW-0689">Ribosomal protein</keyword>
<keyword id="KW-0694">RNA-binding</keyword>
<keyword id="KW-0699">rRNA-binding</keyword>
<keyword id="KW-0820">tRNA-binding</keyword>
<feature type="chain" id="PRO_0000146288" description="Small ribosomal subunit protein uS12">
    <location>
        <begin position="1"/>
        <end position="125"/>
    </location>
</feature>
<feature type="region of interest" description="Disordered" evidence="3">
    <location>
        <begin position="104"/>
        <end position="125"/>
    </location>
</feature>
<feature type="modified residue" description="3-methylthioaspartic acid" evidence="1">
    <location>
        <position position="89"/>
    </location>
</feature>
<comment type="function">
    <text evidence="2">With S4 and S5 plays an important role in translational accuracy.</text>
</comment>
<comment type="function">
    <text evidence="2">Interacts with and stabilizes bases of the 16S rRNA that are involved in tRNA selection in the A site and with the mRNA backbone. Located at the interface of the 30S and 50S subunits, it traverses the body of the 30S subunit contacting proteins on the other side and probably holding the rRNA structure together. The combined cluster of proteins S8, S12 and S17 appears to hold together the shoulder and platform of the 30S subunit.</text>
</comment>
<comment type="subunit">
    <text evidence="2">Part of the 30S ribosomal subunit. Contacts proteins S8 and S17. May interact with IF1 in the 30S initiation complex.</text>
</comment>
<comment type="similarity">
    <text evidence="2">Belongs to the universal ribosomal protein uS12 family.</text>
</comment>
<gene>
    <name evidence="2" type="primary">rpsL</name>
    <name evidence="2" type="synonym">rps12</name>
    <name type="ordered locus">PMT_1779</name>
</gene>
<proteinExistence type="inferred from homology"/>
<sequence length="125" mass="13975">MPTIQQLIRTERQHLTRKTKSPALRACPERRGVCTRVYTSTPKKPNSALRKVARVRLTSGFEVTAYIPGIGHNLQEHSVVLIRGGRVKDLPGVRYHIIRGTLDTAGVKDRSQSRSKYGAKASKQD</sequence>
<evidence type="ECO:0000250" key="1"/>
<evidence type="ECO:0000255" key="2">
    <source>
        <dbReference type="HAMAP-Rule" id="MF_00403"/>
    </source>
</evidence>
<evidence type="ECO:0000256" key="3">
    <source>
        <dbReference type="SAM" id="MobiDB-lite"/>
    </source>
</evidence>
<evidence type="ECO:0000305" key="4"/>
<protein>
    <recommendedName>
        <fullName evidence="2">Small ribosomal subunit protein uS12</fullName>
    </recommendedName>
    <alternativeName>
        <fullName evidence="4">30S ribosomal protein S12</fullName>
    </alternativeName>
</protein>
<organism>
    <name type="scientific">Prochlorococcus marinus (strain MIT 9313)</name>
    <dbReference type="NCBI Taxonomy" id="74547"/>
    <lineage>
        <taxon>Bacteria</taxon>
        <taxon>Bacillati</taxon>
        <taxon>Cyanobacteriota</taxon>
        <taxon>Cyanophyceae</taxon>
        <taxon>Synechococcales</taxon>
        <taxon>Prochlorococcaceae</taxon>
        <taxon>Prochlorococcus</taxon>
    </lineage>
</organism>
<accession>Q7V503</accession>
<dbReference type="EMBL" id="BX548175">
    <property type="protein sequence ID" value="CAE21954.1"/>
    <property type="molecule type" value="Genomic_DNA"/>
</dbReference>
<dbReference type="RefSeq" id="WP_011131146.1">
    <property type="nucleotide sequence ID" value="NC_005071.1"/>
</dbReference>
<dbReference type="SMR" id="Q7V503"/>
<dbReference type="KEGG" id="pmt:PMT_1779"/>
<dbReference type="eggNOG" id="COG0048">
    <property type="taxonomic scope" value="Bacteria"/>
</dbReference>
<dbReference type="HOGENOM" id="CLU_104295_1_2_3"/>
<dbReference type="OrthoDB" id="9802366at2"/>
<dbReference type="Proteomes" id="UP000001423">
    <property type="component" value="Chromosome"/>
</dbReference>
<dbReference type="GO" id="GO:0015935">
    <property type="term" value="C:small ribosomal subunit"/>
    <property type="evidence" value="ECO:0007669"/>
    <property type="project" value="InterPro"/>
</dbReference>
<dbReference type="GO" id="GO:0019843">
    <property type="term" value="F:rRNA binding"/>
    <property type="evidence" value="ECO:0007669"/>
    <property type="project" value="UniProtKB-UniRule"/>
</dbReference>
<dbReference type="GO" id="GO:0003735">
    <property type="term" value="F:structural constituent of ribosome"/>
    <property type="evidence" value="ECO:0007669"/>
    <property type="project" value="InterPro"/>
</dbReference>
<dbReference type="GO" id="GO:0000049">
    <property type="term" value="F:tRNA binding"/>
    <property type="evidence" value="ECO:0007669"/>
    <property type="project" value="UniProtKB-UniRule"/>
</dbReference>
<dbReference type="GO" id="GO:0006412">
    <property type="term" value="P:translation"/>
    <property type="evidence" value="ECO:0007669"/>
    <property type="project" value="UniProtKB-UniRule"/>
</dbReference>
<dbReference type="CDD" id="cd03368">
    <property type="entry name" value="Ribosomal_S12"/>
    <property type="match status" value="1"/>
</dbReference>
<dbReference type="FunFam" id="2.40.50.140:FF:000001">
    <property type="entry name" value="30S ribosomal protein S12"/>
    <property type="match status" value="1"/>
</dbReference>
<dbReference type="Gene3D" id="2.40.50.140">
    <property type="entry name" value="Nucleic acid-binding proteins"/>
    <property type="match status" value="1"/>
</dbReference>
<dbReference type="HAMAP" id="MF_00403_B">
    <property type="entry name" value="Ribosomal_uS12_B"/>
    <property type="match status" value="1"/>
</dbReference>
<dbReference type="InterPro" id="IPR012340">
    <property type="entry name" value="NA-bd_OB-fold"/>
</dbReference>
<dbReference type="InterPro" id="IPR006032">
    <property type="entry name" value="Ribosomal_uS12"/>
</dbReference>
<dbReference type="InterPro" id="IPR005679">
    <property type="entry name" value="Ribosomal_uS12_bac"/>
</dbReference>
<dbReference type="NCBIfam" id="TIGR00981">
    <property type="entry name" value="rpsL_bact"/>
    <property type="match status" value="1"/>
</dbReference>
<dbReference type="PANTHER" id="PTHR11652">
    <property type="entry name" value="30S RIBOSOMAL PROTEIN S12 FAMILY MEMBER"/>
    <property type="match status" value="1"/>
</dbReference>
<dbReference type="Pfam" id="PF00164">
    <property type="entry name" value="Ribosom_S12_S23"/>
    <property type="match status" value="1"/>
</dbReference>
<dbReference type="PIRSF" id="PIRSF002133">
    <property type="entry name" value="Ribosomal_S12/S23"/>
    <property type="match status" value="1"/>
</dbReference>
<dbReference type="PRINTS" id="PR01034">
    <property type="entry name" value="RIBOSOMALS12"/>
</dbReference>
<dbReference type="SUPFAM" id="SSF50249">
    <property type="entry name" value="Nucleic acid-binding proteins"/>
    <property type="match status" value="1"/>
</dbReference>
<dbReference type="PROSITE" id="PS00055">
    <property type="entry name" value="RIBOSOMAL_S12"/>
    <property type="match status" value="1"/>
</dbReference>
<reference key="1">
    <citation type="journal article" date="2003" name="Nature">
        <title>Genome divergence in two Prochlorococcus ecotypes reflects oceanic niche differentiation.</title>
        <authorList>
            <person name="Rocap G."/>
            <person name="Larimer F.W."/>
            <person name="Lamerdin J.E."/>
            <person name="Malfatti S."/>
            <person name="Chain P."/>
            <person name="Ahlgren N.A."/>
            <person name="Arellano A."/>
            <person name="Coleman M."/>
            <person name="Hauser L."/>
            <person name="Hess W.R."/>
            <person name="Johnson Z.I."/>
            <person name="Land M.L."/>
            <person name="Lindell D."/>
            <person name="Post A.F."/>
            <person name="Regala W."/>
            <person name="Shah M."/>
            <person name="Shaw S.L."/>
            <person name="Steglich C."/>
            <person name="Sullivan M.B."/>
            <person name="Ting C.S."/>
            <person name="Tolonen A."/>
            <person name="Webb E.A."/>
            <person name="Zinser E.R."/>
            <person name="Chisholm S.W."/>
        </authorList>
    </citation>
    <scope>NUCLEOTIDE SEQUENCE [LARGE SCALE GENOMIC DNA]</scope>
    <source>
        <strain>MIT 9313</strain>
    </source>
</reference>